<feature type="chain" id="PRO_1000015163" description="Cell division protein ZipA">
    <location>
        <begin position="1"/>
        <end position="328"/>
    </location>
</feature>
<feature type="topological domain" description="Periplasmic" evidence="1">
    <location>
        <begin position="1"/>
        <end position="6"/>
    </location>
</feature>
<feature type="transmembrane region" description="Helical" evidence="1">
    <location>
        <begin position="7"/>
        <end position="27"/>
    </location>
</feature>
<feature type="topological domain" description="Cytoplasmic" evidence="1">
    <location>
        <begin position="28"/>
        <end position="328"/>
    </location>
</feature>
<feature type="region of interest" description="Disordered" evidence="2">
    <location>
        <begin position="61"/>
        <end position="183"/>
    </location>
</feature>
<feature type="compositionally biased region" description="Basic and acidic residues" evidence="2">
    <location>
        <begin position="61"/>
        <end position="72"/>
    </location>
</feature>
<feature type="compositionally biased region" description="Polar residues" evidence="2">
    <location>
        <begin position="95"/>
        <end position="104"/>
    </location>
</feature>
<feature type="compositionally biased region" description="Polar residues" evidence="2">
    <location>
        <begin position="164"/>
        <end position="174"/>
    </location>
</feature>
<comment type="function">
    <text evidence="1">Essential cell division protein that stabilizes the FtsZ protofilaments by cross-linking them and that serves as a cytoplasmic membrane anchor for the Z ring. Also required for the recruitment to the septal ring of downstream cell division proteins.</text>
</comment>
<comment type="subunit">
    <text evidence="1">Interacts with FtsZ via their C-terminal domains.</text>
</comment>
<comment type="subcellular location">
    <subcellularLocation>
        <location evidence="1">Cell inner membrane</location>
        <topology evidence="1">Single-pass type I membrane protein</topology>
    </subcellularLocation>
    <text evidence="1">Localizes to the Z ring in an FtsZ-dependent manner.</text>
</comment>
<comment type="similarity">
    <text evidence="1">Belongs to the ZipA family.</text>
</comment>
<protein>
    <recommendedName>
        <fullName evidence="1">Cell division protein ZipA</fullName>
    </recommendedName>
</protein>
<reference key="1">
    <citation type="submission" date="2007-02" db="EMBL/GenBank/DDBJ databases">
        <title>Complete sequence of chromosome of Yersinia pestis Pestoides F.</title>
        <authorList>
            <consortium name="US DOE Joint Genome Institute"/>
            <person name="Copeland A."/>
            <person name="Lucas S."/>
            <person name="Lapidus A."/>
            <person name="Barry K."/>
            <person name="Detter J.C."/>
            <person name="Glavina del Rio T."/>
            <person name="Hammon N."/>
            <person name="Israni S."/>
            <person name="Dalin E."/>
            <person name="Tice H."/>
            <person name="Pitluck S."/>
            <person name="Di Bartolo G."/>
            <person name="Chain P."/>
            <person name="Malfatti S."/>
            <person name="Shin M."/>
            <person name="Vergez L."/>
            <person name="Schmutz J."/>
            <person name="Larimer F."/>
            <person name="Land M."/>
            <person name="Hauser L."/>
            <person name="Worsham P."/>
            <person name="Chu M."/>
            <person name="Bearden S."/>
            <person name="Garcia E."/>
            <person name="Richardson P."/>
        </authorList>
    </citation>
    <scope>NUCLEOTIDE SEQUENCE [LARGE SCALE GENOMIC DNA]</scope>
    <source>
        <strain>Pestoides F</strain>
    </source>
</reference>
<gene>
    <name evidence="1" type="primary">zipA</name>
    <name type="ordered locus">YPDSF_2098</name>
</gene>
<evidence type="ECO:0000255" key="1">
    <source>
        <dbReference type="HAMAP-Rule" id="MF_00509"/>
    </source>
</evidence>
<evidence type="ECO:0000256" key="2">
    <source>
        <dbReference type="SAM" id="MobiDB-lite"/>
    </source>
</evidence>
<keyword id="KW-0131">Cell cycle</keyword>
<keyword id="KW-0132">Cell division</keyword>
<keyword id="KW-0997">Cell inner membrane</keyword>
<keyword id="KW-1003">Cell membrane</keyword>
<keyword id="KW-0472">Membrane</keyword>
<keyword id="KW-0812">Transmembrane</keyword>
<keyword id="KW-1133">Transmembrane helix</keyword>
<dbReference type="EMBL" id="CP000668">
    <property type="protein sequence ID" value="ABP40477.1"/>
    <property type="molecule type" value="Genomic_DNA"/>
</dbReference>
<dbReference type="RefSeq" id="WP_002227089.1">
    <property type="nucleotide sequence ID" value="NZ_CP009715.1"/>
</dbReference>
<dbReference type="SMR" id="A4TMG5"/>
<dbReference type="GeneID" id="57975708"/>
<dbReference type="KEGG" id="ypp:YPDSF_2098"/>
<dbReference type="PATRIC" id="fig|386656.14.peg.3573"/>
<dbReference type="GO" id="GO:0032153">
    <property type="term" value="C:cell division site"/>
    <property type="evidence" value="ECO:0007669"/>
    <property type="project" value="UniProtKB-UniRule"/>
</dbReference>
<dbReference type="GO" id="GO:0005886">
    <property type="term" value="C:plasma membrane"/>
    <property type="evidence" value="ECO:0007669"/>
    <property type="project" value="UniProtKB-SubCell"/>
</dbReference>
<dbReference type="GO" id="GO:0000917">
    <property type="term" value="P:division septum assembly"/>
    <property type="evidence" value="ECO:0007669"/>
    <property type="project" value="TreeGrafter"/>
</dbReference>
<dbReference type="GO" id="GO:0043093">
    <property type="term" value="P:FtsZ-dependent cytokinesis"/>
    <property type="evidence" value="ECO:0007669"/>
    <property type="project" value="UniProtKB-UniRule"/>
</dbReference>
<dbReference type="CDD" id="cd00231">
    <property type="entry name" value="ZipA"/>
    <property type="match status" value="1"/>
</dbReference>
<dbReference type="FunFam" id="3.30.1400.10:FF:000001">
    <property type="entry name" value="Cell division protein ZipA"/>
    <property type="match status" value="1"/>
</dbReference>
<dbReference type="Gene3D" id="3.30.1400.10">
    <property type="entry name" value="ZipA, C-terminal FtsZ-binding domain"/>
    <property type="match status" value="1"/>
</dbReference>
<dbReference type="HAMAP" id="MF_00509">
    <property type="entry name" value="ZipA"/>
    <property type="match status" value="1"/>
</dbReference>
<dbReference type="InterPro" id="IPR011919">
    <property type="entry name" value="Cell_div_ZipA"/>
</dbReference>
<dbReference type="InterPro" id="IPR007449">
    <property type="entry name" value="ZipA_FtsZ-bd_C"/>
</dbReference>
<dbReference type="InterPro" id="IPR036765">
    <property type="entry name" value="ZipA_FtsZ-bd_C_sf"/>
</dbReference>
<dbReference type="NCBIfam" id="TIGR02205">
    <property type="entry name" value="septum_zipA"/>
    <property type="match status" value="1"/>
</dbReference>
<dbReference type="PANTHER" id="PTHR38685">
    <property type="entry name" value="CELL DIVISION PROTEIN ZIPA"/>
    <property type="match status" value="1"/>
</dbReference>
<dbReference type="PANTHER" id="PTHR38685:SF1">
    <property type="entry name" value="CELL DIVISION PROTEIN ZIPA"/>
    <property type="match status" value="1"/>
</dbReference>
<dbReference type="Pfam" id="PF04354">
    <property type="entry name" value="ZipA_C"/>
    <property type="match status" value="1"/>
</dbReference>
<dbReference type="SMART" id="SM00771">
    <property type="entry name" value="ZipA_C"/>
    <property type="match status" value="1"/>
</dbReference>
<dbReference type="SUPFAM" id="SSF64383">
    <property type="entry name" value="Cell-division protein ZipA, C-terminal domain"/>
    <property type="match status" value="1"/>
</dbReference>
<name>ZIPA_YERPP</name>
<proteinExistence type="inferred from homology"/>
<accession>A4TMG5</accession>
<organism>
    <name type="scientific">Yersinia pestis (strain Pestoides F)</name>
    <dbReference type="NCBI Taxonomy" id="386656"/>
    <lineage>
        <taxon>Bacteria</taxon>
        <taxon>Pseudomonadati</taxon>
        <taxon>Pseudomonadota</taxon>
        <taxon>Gammaproteobacteria</taxon>
        <taxon>Enterobacterales</taxon>
        <taxon>Yersiniaceae</taxon>
        <taxon>Yersinia</taxon>
    </lineage>
</organism>
<sequence length="328" mass="36098">MMQDLRLILIVVGAIAIIALLLHGLWTSRKERSSLFRDRPVKRTKQERVETPIESLDEGVGEVRVRTSHPQEKPSFNHLDDDDDEVPVIQHAETKSAQVKTASRQAPFASVQTDYDDPLLGGLSAEQPPHDLSRDPLLGKADESYSQPQHAEPPHVEKPAHQVAPQQHVESQQEPVAPAPEAKPQKLKETVLVLHVAAHHGGVIGGEVLLQSVLQSGFQFGEMGIFHRHLSPAGSGPVLFSLANMVKPGSFDPDTMSDFSTPGVSMFMMVPSYGDANQNFKLMLQSAQRIADDVGGVVLDDERRMMTPQKLESYKARIREVLDANTIA</sequence>